<accession>G3V0H7</accession>
<accession>Q71QF0</accession>
<dbReference type="EMBL" id="AF401642">
    <property type="protein sequence ID" value="AAQ03085.1"/>
    <property type="molecule type" value="mRNA"/>
</dbReference>
<dbReference type="EMBL" id="AC011604">
    <property type="status" value="NOT_ANNOTATED_CDS"/>
    <property type="molecule type" value="Genomic_DNA"/>
</dbReference>
<dbReference type="EMBL" id="AC087309">
    <property type="status" value="NOT_ANNOTATED_CDS"/>
    <property type="molecule type" value="Genomic_DNA"/>
</dbReference>
<dbReference type="EMBL" id="CH471094">
    <property type="protein sequence ID" value="EAW96417.1"/>
    <property type="molecule type" value="Genomic_DNA"/>
</dbReference>
<dbReference type="RefSeq" id="NP_001009562.3">
    <property type="nucleotide sequence ID" value="NM_001009562.4"/>
</dbReference>
<dbReference type="SMR" id="G3V0H7"/>
<dbReference type="FunCoup" id="G3V0H7">
    <property type="interactions" value="1"/>
</dbReference>
<dbReference type="STRING" id="9606.ENSP00000394168"/>
<dbReference type="TCDB" id="2.A.60.1.29">
    <property type="family name" value="the organo anion transporter (oat) family"/>
</dbReference>
<dbReference type="GlyGen" id="G3V0H7">
    <property type="glycosylation" value="1 site, 1 O-linked glycan (1 site)"/>
</dbReference>
<dbReference type="iPTMnet" id="G3V0H7"/>
<dbReference type="PhosphoSitePlus" id="G3V0H7"/>
<dbReference type="BioMuta" id="SLCO1B7"/>
<dbReference type="jPOST" id="G3V0H7"/>
<dbReference type="MassIVE" id="G3V0H7"/>
<dbReference type="PaxDb" id="9606-ENSP00000394168"/>
<dbReference type="PeptideAtlas" id="G3V0H7"/>
<dbReference type="ProteomicsDB" id="32200"/>
<dbReference type="DNASU" id="338821"/>
<dbReference type="UCSC" id="uc010sin.2">
    <molecule id="G3V0H7-1"/>
    <property type="organism name" value="human"/>
</dbReference>
<dbReference type="AGR" id="HGNC:32934"/>
<dbReference type="DisGeNET" id="338821"/>
<dbReference type="GeneCards" id="SLCO1B7"/>
<dbReference type="HGNC" id="HGNC:32934">
    <property type="gene designation" value="SLCO1B7"/>
</dbReference>
<dbReference type="MIM" id="619875">
    <property type="type" value="gene"/>
</dbReference>
<dbReference type="neXtProt" id="NX_G3V0H7"/>
<dbReference type="eggNOG" id="KOG3626">
    <property type="taxonomic scope" value="Eukaryota"/>
</dbReference>
<dbReference type="HOGENOM" id="CLU_008954_4_0_1"/>
<dbReference type="InParanoid" id="G3V0H7"/>
<dbReference type="PAN-GO" id="G3V0H7">
    <property type="GO annotations" value="5 GO annotations based on evolutionary models"/>
</dbReference>
<dbReference type="TreeFam" id="TF317540"/>
<dbReference type="PathwayCommons" id="G3V0H7"/>
<dbReference type="BioGRID-ORCS" id="338821">
    <property type="hits" value="13 hits in 1131 CRISPR screens"/>
</dbReference>
<dbReference type="ChiTaRS" id="SLCO1B7">
    <property type="organism name" value="human"/>
</dbReference>
<dbReference type="GenomeRNAi" id="338821"/>
<dbReference type="Pharos" id="G3V0H7">
    <property type="development level" value="Tdark"/>
</dbReference>
<dbReference type="Proteomes" id="UP000005640">
    <property type="component" value="Unplaced"/>
</dbReference>
<dbReference type="RNAct" id="G3V0H7">
    <property type="molecule type" value="protein"/>
</dbReference>
<dbReference type="GO" id="GO:0016323">
    <property type="term" value="C:basolateral plasma membrane"/>
    <property type="evidence" value="ECO:0000318"/>
    <property type="project" value="GO_Central"/>
</dbReference>
<dbReference type="GO" id="GO:0015125">
    <property type="term" value="F:bile acid transmembrane transporter activity"/>
    <property type="evidence" value="ECO:0000318"/>
    <property type="project" value="GO_Central"/>
</dbReference>
<dbReference type="GO" id="GO:0004867">
    <property type="term" value="F:serine-type endopeptidase inhibitor activity"/>
    <property type="evidence" value="ECO:0007669"/>
    <property type="project" value="UniProtKB-KW"/>
</dbReference>
<dbReference type="GO" id="GO:0015347">
    <property type="term" value="F:sodium-independent organic anion transmembrane transporter activity"/>
    <property type="evidence" value="ECO:0000318"/>
    <property type="project" value="GO_Central"/>
</dbReference>
<dbReference type="GO" id="GO:0015721">
    <property type="term" value="P:bile acid and bile salt transport"/>
    <property type="evidence" value="ECO:0000318"/>
    <property type="project" value="GO_Central"/>
</dbReference>
<dbReference type="GO" id="GO:0043252">
    <property type="term" value="P:sodium-independent organic anion transport"/>
    <property type="evidence" value="ECO:0000318"/>
    <property type="project" value="GO_Central"/>
</dbReference>
<dbReference type="Gene3D" id="3.30.60.30">
    <property type="match status" value="1"/>
</dbReference>
<dbReference type="Gene3D" id="1.20.1250.20">
    <property type="entry name" value="MFS general substrate transporter like domains"/>
    <property type="match status" value="1"/>
</dbReference>
<dbReference type="InterPro" id="IPR002350">
    <property type="entry name" value="Kazal_dom"/>
</dbReference>
<dbReference type="InterPro" id="IPR036058">
    <property type="entry name" value="Kazal_dom_sf"/>
</dbReference>
<dbReference type="InterPro" id="IPR020846">
    <property type="entry name" value="MFS_dom"/>
</dbReference>
<dbReference type="InterPro" id="IPR036259">
    <property type="entry name" value="MFS_trans_sf"/>
</dbReference>
<dbReference type="InterPro" id="IPR004156">
    <property type="entry name" value="OATP"/>
</dbReference>
<dbReference type="NCBIfam" id="TIGR00805">
    <property type="entry name" value="oat"/>
    <property type="match status" value="1"/>
</dbReference>
<dbReference type="PANTHER" id="PTHR11388">
    <property type="entry name" value="ORGANIC ANION TRANSPORTER"/>
    <property type="match status" value="1"/>
</dbReference>
<dbReference type="PANTHER" id="PTHR11388:SF154">
    <property type="entry name" value="SLCO1B3-SLCO1B7 READTHROUGH TRANSCRIPT PROTEIN-RELATED"/>
    <property type="match status" value="1"/>
</dbReference>
<dbReference type="Pfam" id="PF07648">
    <property type="entry name" value="Kazal_2"/>
    <property type="match status" value="1"/>
</dbReference>
<dbReference type="Pfam" id="PF03137">
    <property type="entry name" value="OATP"/>
    <property type="match status" value="1"/>
</dbReference>
<dbReference type="SUPFAM" id="SSF100895">
    <property type="entry name" value="Kazal-type serine protease inhibitors"/>
    <property type="match status" value="1"/>
</dbReference>
<dbReference type="SUPFAM" id="SSF103473">
    <property type="entry name" value="MFS general substrate transporter"/>
    <property type="match status" value="1"/>
</dbReference>
<dbReference type="PROSITE" id="PS51465">
    <property type="entry name" value="KAZAL_2"/>
    <property type="match status" value="1"/>
</dbReference>
<dbReference type="PROSITE" id="PS50850">
    <property type="entry name" value="MFS"/>
    <property type="match status" value="1"/>
</dbReference>
<organism>
    <name type="scientific">Homo sapiens</name>
    <name type="common">Human</name>
    <dbReference type="NCBI Taxonomy" id="9606"/>
    <lineage>
        <taxon>Eukaryota</taxon>
        <taxon>Metazoa</taxon>
        <taxon>Chordata</taxon>
        <taxon>Craniata</taxon>
        <taxon>Vertebrata</taxon>
        <taxon>Euteleostomi</taxon>
        <taxon>Mammalia</taxon>
        <taxon>Eutheria</taxon>
        <taxon>Euarchontoglires</taxon>
        <taxon>Primates</taxon>
        <taxon>Haplorrhini</taxon>
        <taxon>Catarrhini</taxon>
        <taxon>Hominidae</taxon>
        <taxon>Homo</taxon>
    </lineage>
</organism>
<proteinExistence type="uncertain"/>
<comment type="subcellular location">
    <subcellularLocation>
        <location evidence="4">Cell membrane</location>
        <topology evidence="4">Multi-pass membrane protein</topology>
    </subcellularLocation>
</comment>
<comment type="alternative products">
    <event type="alternative splicing"/>
    <isoform>
        <id>G3V0H7-1</id>
        <name>SLCO1B7-1</name>
        <sequence type="displayed"/>
    </isoform>
    <isoform>
        <id>F5H094-1</id>
        <name>SLCO1B3-SLCO1B7-1</name>
        <sequence type="external"/>
    </isoform>
</comment>
<comment type="similarity">
    <text evidence="4">Belongs to the organo anion transporter (TC 2.A.60) family.</text>
</comment>
<comment type="caution">
    <text evidence="4">Product of a dubious CDS prediction. May encode a non-functional truncated protein.</text>
</comment>
<protein>
    <recommendedName>
        <fullName>Putative solute carrier organic anion transporter family member 1B7</fullName>
    </recommendedName>
    <alternativeName>
        <fullName>Liver-specific organic anion transporter 3</fullName>
        <shortName>LST-3</shortName>
    </alternativeName>
    <alternativeName>
        <fullName>Putative organic anion transporting polypeptide 1B7</fullName>
        <shortName>OATP1B7</shortName>
    </alternativeName>
</protein>
<reference key="1">
    <citation type="submission" date="2003-12" db="EMBL/GenBank/DDBJ databases">
        <title>LST-3, a novel liver-specific organic anion transporter.</title>
        <authorList>
            <person name="Abe T."/>
        </authorList>
    </citation>
    <scope>NUCLEOTIDE SEQUENCE [MRNA]</scope>
</reference>
<reference key="2">
    <citation type="journal article" date="2006" name="Nature">
        <title>The finished DNA sequence of human chromosome 12.</title>
        <authorList>
            <person name="Scherer S.E."/>
            <person name="Muzny D.M."/>
            <person name="Buhay C.J."/>
            <person name="Chen R."/>
            <person name="Cree A."/>
            <person name="Ding Y."/>
            <person name="Dugan-Rocha S."/>
            <person name="Gill R."/>
            <person name="Gunaratne P."/>
            <person name="Harris R.A."/>
            <person name="Hawes A.C."/>
            <person name="Hernandez J."/>
            <person name="Hodgson A.V."/>
            <person name="Hume J."/>
            <person name="Jackson A."/>
            <person name="Khan Z.M."/>
            <person name="Kovar-Smith C."/>
            <person name="Lewis L.R."/>
            <person name="Lozado R.J."/>
            <person name="Metzker M.L."/>
            <person name="Milosavljevic A."/>
            <person name="Miner G.R."/>
            <person name="Montgomery K.T."/>
            <person name="Morgan M.B."/>
            <person name="Nazareth L.V."/>
            <person name="Scott G."/>
            <person name="Sodergren E."/>
            <person name="Song X.-Z."/>
            <person name="Steffen D."/>
            <person name="Lovering R.C."/>
            <person name="Wheeler D.A."/>
            <person name="Worley K.C."/>
            <person name="Yuan Y."/>
            <person name="Zhang Z."/>
            <person name="Adams C.Q."/>
            <person name="Ansari-Lari M.A."/>
            <person name="Ayele M."/>
            <person name="Brown M.J."/>
            <person name="Chen G."/>
            <person name="Chen Z."/>
            <person name="Clerc-Blankenburg K.P."/>
            <person name="Davis C."/>
            <person name="Delgado O."/>
            <person name="Dinh H.H."/>
            <person name="Draper H."/>
            <person name="Gonzalez-Garay M.L."/>
            <person name="Havlak P."/>
            <person name="Jackson L.R."/>
            <person name="Jacob L.S."/>
            <person name="Kelly S.H."/>
            <person name="Li L."/>
            <person name="Li Z."/>
            <person name="Liu J."/>
            <person name="Liu W."/>
            <person name="Lu J."/>
            <person name="Maheshwari M."/>
            <person name="Nguyen B.-V."/>
            <person name="Okwuonu G.O."/>
            <person name="Pasternak S."/>
            <person name="Perez L.M."/>
            <person name="Plopper F.J.H."/>
            <person name="Santibanez J."/>
            <person name="Shen H."/>
            <person name="Tabor P.E."/>
            <person name="Verduzco D."/>
            <person name="Waldron L."/>
            <person name="Wang Q."/>
            <person name="Williams G.A."/>
            <person name="Zhang J."/>
            <person name="Zhou J."/>
            <person name="Allen C.C."/>
            <person name="Amin A.G."/>
            <person name="Anyalebechi V."/>
            <person name="Bailey M."/>
            <person name="Barbaria J.A."/>
            <person name="Bimage K.E."/>
            <person name="Bryant N.P."/>
            <person name="Burch P.E."/>
            <person name="Burkett C.E."/>
            <person name="Burrell K.L."/>
            <person name="Calderon E."/>
            <person name="Cardenas V."/>
            <person name="Carter K."/>
            <person name="Casias K."/>
            <person name="Cavazos I."/>
            <person name="Cavazos S.R."/>
            <person name="Ceasar H."/>
            <person name="Chacko J."/>
            <person name="Chan S.N."/>
            <person name="Chavez D."/>
            <person name="Christopoulos C."/>
            <person name="Chu J."/>
            <person name="Cockrell R."/>
            <person name="Cox C.D."/>
            <person name="Dang M."/>
            <person name="Dathorne S.R."/>
            <person name="David R."/>
            <person name="Davis C.M."/>
            <person name="Davy-Carroll L."/>
            <person name="Deshazo D.R."/>
            <person name="Donlin J.E."/>
            <person name="D'Souza L."/>
            <person name="Eaves K.A."/>
            <person name="Egan A."/>
            <person name="Emery-Cohen A.J."/>
            <person name="Escotto M."/>
            <person name="Flagg N."/>
            <person name="Forbes L.D."/>
            <person name="Gabisi A.M."/>
            <person name="Garza M."/>
            <person name="Hamilton C."/>
            <person name="Henderson N."/>
            <person name="Hernandez O."/>
            <person name="Hines S."/>
            <person name="Hogues M.E."/>
            <person name="Huang M."/>
            <person name="Idlebird D.G."/>
            <person name="Johnson R."/>
            <person name="Jolivet A."/>
            <person name="Jones S."/>
            <person name="Kagan R."/>
            <person name="King L.M."/>
            <person name="Leal B."/>
            <person name="Lebow H."/>
            <person name="Lee S."/>
            <person name="LeVan J.M."/>
            <person name="Lewis L.C."/>
            <person name="London P."/>
            <person name="Lorensuhewa L.M."/>
            <person name="Loulseged H."/>
            <person name="Lovett D.A."/>
            <person name="Lucier A."/>
            <person name="Lucier R.L."/>
            <person name="Ma J."/>
            <person name="Madu R.C."/>
            <person name="Mapua P."/>
            <person name="Martindale A.D."/>
            <person name="Martinez E."/>
            <person name="Massey E."/>
            <person name="Mawhiney S."/>
            <person name="Meador M.G."/>
            <person name="Mendez S."/>
            <person name="Mercado C."/>
            <person name="Mercado I.C."/>
            <person name="Merritt C.E."/>
            <person name="Miner Z.L."/>
            <person name="Minja E."/>
            <person name="Mitchell T."/>
            <person name="Mohabbat F."/>
            <person name="Mohabbat K."/>
            <person name="Montgomery B."/>
            <person name="Moore N."/>
            <person name="Morris S."/>
            <person name="Munidasa M."/>
            <person name="Ngo R.N."/>
            <person name="Nguyen N.B."/>
            <person name="Nickerson E."/>
            <person name="Nwaokelemeh O.O."/>
            <person name="Nwokenkwo S."/>
            <person name="Obregon M."/>
            <person name="Oguh M."/>
            <person name="Oragunye N."/>
            <person name="Oviedo R.J."/>
            <person name="Parish B.J."/>
            <person name="Parker D.N."/>
            <person name="Parrish J."/>
            <person name="Parks K.L."/>
            <person name="Paul H.A."/>
            <person name="Payton B.A."/>
            <person name="Perez A."/>
            <person name="Perrin W."/>
            <person name="Pickens A."/>
            <person name="Primus E.L."/>
            <person name="Pu L.-L."/>
            <person name="Puazo M."/>
            <person name="Quiles M.M."/>
            <person name="Quiroz J.B."/>
            <person name="Rabata D."/>
            <person name="Reeves K."/>
            <person name="Ruiz S.J."/>
            <person name="Shao H."/>
            <person name="Sisson I."/>
            <person name="Sonaike T."/>
            <person name="Sorelle R.P."/>
            <person name="Sutton A.E."/>
            <person name="Svatek A.F."/>
            <person name="Svetz L.A."/>
            <person name="Tamerisa K.S."/>
            <person name="Taylor T.R."/>
            <person name="Teague B."/>
            <person name="Thomas N."/>
            <person name="Thorn R.D."/>
            <person name="Trejos Z.Y."/>
            <person name="Trevino B.K."/>
            <person name="Ukegbu O.N."/>
            <person name="Urban J.B."/>
            <person name="Vasquez L.I."/>
            <person name="Vera V.A."/>
            <person name="Villasana D.M."/>
            <person name="Wang L."/>
            <person name="Ward-Moore S."/>
            <person name="Warren J.T."/>
            <person name="Wei X."/>
            <person name="White F."/>
            <person name="Williamson A.L."/>
            <person name="Wleczyk R."/>
            <person name="Wooden H.S."/>
            <person name="Wooden S.H."/>
            <person name="Yen J."/>
            <person name="Yoon L."/>
            <person name="Yoon V."/>
            <person name="Zorrilla S.E."/>
            <person name="Nelson D."/>
            <person name="Kucherlapati R."/>
            <person name="Weinstock G."/>
            <person name="Gibbs R.A."/>
        </authorList>
    </citation>
    <scope>NUCLEOTIDE SEQUENCE [LARGE SCALE GENOMIC DNA]</scope>
</reference>
<reference key="3">
    <citation type="submission" date="2005-07" db="EMBL/GenBank/DDBJ databases">
        <authorList>
            <person name="Mural R.J."/>
            <person name="Istrail S."/>
            <person name="Sutton G.G."/>
            <person name="Florea L."/>
            <person name="Halpern A.L."/>
            <person name="Mobarry C.M."/>
            <person name="Lippert R."/>
            <person name="Walenz B."/>
            <person name="Shatkay H."/>
            <person name="Dew I."/>
            <person name="Miller J.R."/>
            <person name="Flanigan M.J."/>
            <person name="Edwards N.J."/>
            <person name="Bolanos R."/>
            <person name="Fasulo D."/>
            <person name="Halldorsson B.V."/>
            <person name="Hannenhalli S."/>
            <person name="Turner R."/>
            <person name="Yooseph S."/>
            <person name="Lu F."/>
            <person name="Nusskern D.R."/>
            <person name="Shue B.C."/>
            <person name="Zheng X.H."/>
            <person name="Zhong F."/>
            <person name="Delcher A.L."/>
            <person name="Huson D.H."/>
            <person name="Kravitz S.A."/>
            <person name="Mouchard L."/>
            <person name="Reinert K."/>
            <person name="Remington K.A."/>
            <person name="Clark A.G."/>
            <person name="Waterman M.S."/>
            <person name="Eichler E.E."/>
            <person name="Adams M.D."/>
            <person name="Hunkapiller M.W."/>
            <person name="Myers E.W."/>
            <person name="Venter J.C."/>
        </authorList>
    </citation>
    <scope>NUCLEOTIDE SEQUENCE [LARGE SCALE GENOMIC DNA]</scope>
</reference>
<gene>
    <name type="primary">SLCO1B7</name>
    <name type="synonym">LST3</name>
    <name type="synonym">LST3TM12</name>
</gene>
<sequence length="640" mass="71247">MKISTTQIERRFEISSSLVGLIDGSFEIGNLFVIVFVSYFGSKLHRPKLIGIGCFLMGTGSILMALPHFFMGYYRYSKETNIDPSENSTSNLPNCLINQMLSLNRTPSEIIERGCVKESGSHMWIYVFMGNMLRGIGETPIVPLGISYIDDFAKEGHSSLYLGTVNVMGMTGLVFAFMLGSLFAKMYVDIGYVDLSTIRITPKDSRWVGAWWLGFLVSGIVSIISSIPFFFLPLNPNKPQKERKVSLFLHVLKTNDKRNQIANLTNRRKYITKNVTGFFQSLKSILTNPLYVIFVIFTLLHMSSYIASLTYIIKMVEQQYGWSASKTNFLLGVLALPAVAIGMFSGGYIIKKFKLSLVGLAKLAFCSATVHLLSQVLYFFLICESKSVAGLTLTYDGNSPVRSHVDVPLSYCNSECNCDESQWEPVCGNNGITYLSPCLAGCKSSSGNKEPIVFYNCSCVEVIGLQNKNYSAHLGECPRDDACTRKSYVYFVIQVLDAFLCAVGLTSYSVLVIRIVQPELKALAIGFHSMIMRSLGGILVPIYFGALIDTTCMKWSTNSCGARGACRIYNSTYLGRAFFGLKVALIFPVLVLLTVFIFVVRKKSHGKDTKVLENERQVMDEANLEFLNDSEHFVPSAEEQ</sequence>
<evidence type="ECO:0000250" key="1">
    <source>
        <dbReference type="UniProtKB" id="Q9Y6L6"/>
    </source>
</evidence>
<evidence type="ECO:0000255" key="2"/>
<evidence type="ECO:0000255" key="3">
    <source>
        <dbReference type="PROSITE-ProRule" id="PRU00798"/>
    </source>
</evidence>
<evidence type="ECO:0000305" key="4"/>
<feature type="chain" id="PRO_0000415774" description="Putative solute carrier organic anion transporter family member 1B7">
    <location>
        <begin position="1"/>
        <end position="640"/>
    </location>
</feature>
<feature type="topological domain" description="Extracellular" evidence="2">
    <location>
        <begin position="1"/>
        <end position="16"/>
    </location>
</feature>
<feature type="transmembrane region" description="Helical; Name=1" evidence="2">
    <location>
        <begin position="17"/>
        <end position="37"/>
    </location>
</feature>
<feature type="topological domain" description="Cytoplasmic" evidence="2">
    <location>
        <begin position="38"/>
        <end position="49"/>
    </location>
</feature>
<feature type="transmembrane region" description="Helical; Name=2" evidence="2">
    <location>
        <begin position="50"/>
        <end position="70"/>
    </location>
</feature>
<feature type="topological domain" description="Extracellular" evidence="2">
    <location>
        <begin position="71"/>
        <end position="123"/>
    </location>
</feature>
<feature type="transmembrane region" description="Helical; Name=3" evidence="2">
    <location>
        <begin position="124"/>
        <end position="144"/>
    </location>
</feature>
<feature type="topological domain" description="Cytoplasmic" evidence="2">
    <location>
        <begin position="145"/>
        <end position="159"/>
    </location>
</feature>
<feature type="transmembrane region" description="Helical; Name=4" evidence="2">
    <location>
        <begin position="160"/>
        <end position="180"/>
    </location>
</feature>
<feature type="topological domain" description="Extracellular" evidence="2">
    <location>
        <begin position="181"/>
        <end position="211"/>
    </location>
</feature>
<feature type="transmembrane region" description="Helical; Name=5" evidence="2">
    <location>
        <begin position="212"/>
        <end position="232"/>
    </location>
</feature>
<feature type="topological domain" description="Cytoplasmic" evidence="2">
    <location>
        <begin position="233"/>
        <end position="292"/>
    </location>
</feature>
<feature type="transmembrane region" description="Helical; Name=6" evidence="2">
    <location>
        <begin position="293"/>
        <end position="313"/>
    </location>
</feature>
<feature type="topological domain" description="Extracellular" evidence="2">
    <location>
        <begin position="314"/>
        <end position="329"/>
    </location>
</feature>
<feature type="transmembrane region" description="Helical; Name=7" evidence="2">
    <location>
        <begin position="330"/>
        <end position="350"/>
    </location>
</feature>
<feature type="topological domain" description="Cytoplasmic" evidence="2">
    <location>
        <begin position="351"/>
        <end position="362"/>
    </location>
</feature>
<feature type="transmembrane region" description="Helical; Name=8" evidence="2">
    <location>
        <begin position="363"/>
        <end position="383"/>
    </location>
</feature>
<feature type="topological domain" description="Extracellular" evidence="2">
    <location>
        <begin position="384"/>
        <end position="492"/>
    </location>
</feature>
<feature type="transmembrane region" description="Helical; Name=9" evidence="2">
    <location>
        <begin position="493"/>
        <end position="513"/>
    </location>
</feature>
<feature type="topological domain" description="Cytoplasmic" evidence="2">
    <location>
        <begin position="514"/>
        <end position="521"/>
    </location>
</feature>
<feature type="transmembrane region" description="Helical; Name=10" evidence="2">
    <location>
        <begin position="522"/>
        <end position="542"/>
    </location>
</feature>
<feature type="topological domain" description="Extracellular" evidence="2">
    <location>
        <begin position="543"/>
        <end position="577"/>
    </location>
</feature>
<feature type="transmembrane region" description="Helical; Name=11" evidence="2">
    <location>
        <begin position="578"/>
        <end position="598"/>
    </location>
</feature>
<feature type="topological domain" description="Cytoplasmic" evidence="2">
    <location>
        <begin position="599"/>
        <end position="640"/>
    </location>
</feature>
<feature type="domain" description="Kazal-like" evidence="3">
    <location>
        <begin position="406"/>
        <end position="461"/>
    </location>
</feature>
<feature type="modified residue" description="Phosphoserine" evidence="1">
    <location>
        <position position="246"/>
    </location>
</feature>
<feature type="modified residue" description="Phosphoserine" evidence="1">
    <location>
        <position position="636"/>
    </location>
</feature>
<feature type="disulfide bond" evidence="3">
    <location>
        <begin position="412"/>
        <end position="442"/>
    </location>
</feature>
<feature type="disulfide bond" evidence="3">
    <location>
        <begin position="418"/>
        <end position="438"/>
    </location>
</feature>
<feature type="disulfide bond" evidence="3">
    <location>
        <begin position="427"/>
        <end position="459"/>
    </location>
</feature>
<feature type="sequence conflict" description="In Ref. 1; AAQ03085." evidence="4" ref="1">
    <original>V</original>
    <variation>A</variation>
    <location>
        <position position="167"/>
    </location>
</feature>
<feature type="sequence conflict" description="In Ref. 1; AAQ03085." evidence="4" ref="1">
    <original>A</original>
    <variation>T</variation>
    <location>
        <position position="338"/>
    </location>
</feature>
<feature type="sequence conflict" description="In Ref. 1; AAQ03085." evidence="4" ref="1">
    <original>D</original>
    <variation>G</variation>
    <location>
        <position position="406"/>
    </location>
</feature>
<keyword id="KW-0025">Alternative splicing</keyword>
<keyword id="KW-1003">Cell membrane</keyword>
<keyword id="KW-1015">Disulfide bond</keyword>
<keyword id="KW-0472">Membrane</keyword>
<keyword id="KW-0597">Phosphoprotein</keyword>
<keyword id="KW-0646">Protease inhibitor</keyword>
<keyword id="KW-1185">Reference proteome</keyword>
<keyword id="KW-0722">Serine protease inhibitor</keyword>
<keyword id="KW-0812">Transmembrane</keyword>
<keyword id="KW-1133">Transmembrane helix</keyword>
<name>SO1B7_HUMAN</name>